<evidence type="ECO:0000255" key="1">
    <source>
        <dbReference type="HAMAP-Rule" id="MF_01440"/>
    </source>
</evidence>
<evidence type="ECO:0000256" key="2">
    <source>
        <dbReference type="SAM" id="MobiDB-lite"/>
    </source>
</evidence>
<accession>Q46PH8</accession>
<sequence length="217" mass="23969">MRTPHLPEAIATRKYFDREFDRQAIKLLPNEYYVTGEDVVLTTVLGSCVAACIRDEKAGVGGMNHFMLPDDEGGTADRMLSASMRYGCYALEVLINELLKMGARRERLEAKVFGGGAVLANMTTLNIGDRNADFVLRYLKTEEIRVAAQDLRGPHARRVSYFPVTGLALVRRLTRQDDQVSVERDERALARAIATSGTAPSRGGELFTRASASRTPS</sequence>
<organism>
    <name type="scientific">Cupriavidus pinatubonensis (strain JMP 134 / LMG 1197)</name>
    <name type="common">Cupriavidus necator (strain JMP 134)</name>
    <dbReference type="NCBI Taxonomy" id="264198"/>
    <lineage>
        <taxon>Bacteria</taxon>
        <taxon>Pseudomonadati</taxon>
        <taxon>Pseudomonadota</taxon>
        <taxon>Betaproteobacteria</taxon>
        <taxon>Burkholderiales</taxon>
        <taxon>Burkholderiaceae</taxon>
        <taxon>Cupriavidus</taxon>
    </lineage>
</organism>
<proteinExistence type="inferred from homology"/>
<feature type="chain" id="PRO_0000251053" description="Probable chemoreceptor glutamine deamidase CheD">
    <location>
        <begin position="1"/>
        <end position="217"/>
    </location>
</feature>
<feature type="region of interest" description="Disordered" evidence="2">
    <location>
        <begin position="194"/>
        <end position="217"/>
    </location>
</feature>
<reference key="1">
    <citation type="journal article" date="2010" name="PLoS ONE">
        <title>The complete multipartite genome sequence of Cupriavidus necator JMP134, a versatile pollutant degrader.</title>
        <authorList>
            <person name="Lykidis A."/>
            <person name="Perez-Pantoja D."/>
            <person name="Ledger T."/>
            <person name="Mavromatis K."/>
            <person name="Anderson I.J."/>
            <person name="Ivanova N.N."/>
            <person name="Hooper S.D."/>
            <person name="Lapidus A."/>
            <person name="Lucas S."/>
            <person name="Gonzalez B."/>
            <person name="Kyrpides N.C."/>
        </authorList>
    </citation>
    <scope>NUCLEOTIDE SEQUENCE [LARGE SCALE GENOMIC DNA]</scope>
    <source>
        <strain>JMP134 / LMG 1197</strain>
    </source>
</reference>
<keyword id="KW-0145">Chemotaxis</keyword>
<keyword id="KW-0378">Hydrolase</keyword>
<comment type="function">
    <text evidence="1">Probably deamidates glutamine residues to glutamate on methyl-accepting chemotaxis receptors (MCPs), playing an important role in chemotaxis.</text>
</comment>
<comment type="catalytic activity">
    <reaction evidence="1">
        <text>L-glutaminyl-[protein] + H2O = L-glutamyl-[protein] + NH4(+)</text>
        <dbReference type="Rhea" id="RHEA:16441"/>
        <dbReference type="Rhea" id="RHEA-COMP:10207"/>
        <dbReference type="Rhea" id="RHEA-COMP:10208"/>
        <dbReference type="ChEBI" id="CHEBI:15377"/>
        <dbReference type="ChEBI" id="CHEBI:28938"/>
        <dbReference type="ChEBI" id="CHEBI:29973"/>
        <dbReference type="ChEBI" id="CHEBI:30011"/>
        <dbReference type="EC" id="3.5.1.44"/>
    </reaction>
</comment>
<comment type="similarity">
    <text evidence="1">Belongs to the CheD family.</text>
</comment>
<protein>
    <recommendedName>
        <fullName evidence="1">Probable chemoreceptor glutamine deamidase CheD</fullName>
        <ecNumber evidence="1">3.5.1.44</ecNumber>
    </recommendedName>
</protein>
<name>CHED_CUPPJ</name>
<gene>
    <name evidence="1" type="primary">cheD</name>
    <name type="ordered locus">Reut_B5611</name>
</gene>
<dbReference type="EC" id="3.5.1.44" evidence="1"/>
<dbReference type="EMBL" id="CP000091">
    <property type="protein sequence ID" value="AAZ64956.1"/>
    <property type="molecule type" value="Genomic_DNA"/>
</dbReference>
<dbReference type="SMR" id="Q46PH8"/>
<dbReference type="STRING" id="264198.Reut_B5611"/>
<dbReference type="KEGG" id="reu:Reut_B5611"/>
<dbReference type="eggNOG" id="COG1871">
    <property type="taxonomic scope" value="Bacteria"/>
</dbReference>
<dbReference type="HOGENOM" id="CLU_087854_0_0_4"/>
<dbReference type="OrthoDB" id="9807202at2"/>
<dbReference type="GO" id="GO:0050568">
    <property type="term" value="F:protein-glutamine glutaminase activity"/>
    <property type="evidence" value="ECO:0007669"/>
    <property type="project" value="UniProtKB-UniRule"/>
</dbReference>
<dbReference type="GO" id="GO:0006935">
    <property type="term" value="P:chemotaxis"/>
    <property type="evidence" value="ECO:0007669"/>
    <property type="project" value="UniProtKB-UniRule"/>
</dbReference>
<dbReference type="CDD" id="cd16352">
    <property type="entry name" value="CheD"/>
    <property type="match status" value="1"/>
</dbReference>
<dbReference type="Gene3D" id="3.30.1330.200">
    <property type="match status" value="1"/>
</dbReference>
<dbReference type="HAMAP" id="MF_01440">
    <property type="entry name" value="CheD"/>
    <property type="match status" value="1"/>
</dbReference>
<dbReference type="InterPro" id="IPR038592">
    <property type="entry name" value="CheD-like_sf"/>
</dbReference>
<dbReference type="InterPro" id="IPR005659">
    <property type="entry name" value="Chemorcpt_Glu_NH3ase_CheD"/>
</dbReference>
<dbReference type="InterPro" id="IPR011324">
    <property type="entry name" value="Cytotoxic_necrot_fac-like_cat"/>
</dbReference>
<dbReference type="NCBIfam" id="NF010013">
    <property type="entry name" value="PRK13487.1"/>
    <property type="match status" value="1"/>
</dbReference>
<dbReference type="NCBIfam" id="NF010014">
    <property type="entry name" value="PRK13489.1"/>
    <property type="match status" value="1"/>
</dbReference>
<dbReference type="PANTHER" id="PTHR35147">
    <property type="entry name" value="CHEMORECEPTOR GLUTAMINE DEAMIDASE CHED-RELATED"/>
    <property type="match status" value="1"/>
</dbReference>
<dbReference type="PANTHER" id="PTHR35147:SF2">
    <property type="entry name" value="CHEMORECEPTOR GLUTAMINE DEAMIDASE CHED-RELATED"/>
    <property type="match status" value="1"/>
</dbReference>
<dbReference type="Pfam" id="PF03975">
    <property type="entry name" value="CheD"/>
    <property type="match status" value="1"/>
</dbReference>
<dbReference type="SUPFAM" id="SSF64438">
    <property type="entry name" value="CNF1/YfiH-like putative cysteine hydrolases"/>
    <property type="match status" value="1"/>
</dbReference>